<accession>Q8DHQ2</accession>
<reference key="1">
    <citation type="journal article" date="2002" name="DNA Res.">
        <title>Complete genome structure of the thermophilic cyanobacterium Thermosynechococcus elongatus BP-1.</title>
        <authorList>
            <person name="Nakamura Y."/>
            <person name="Kaneko T."/>
            <person name="Sato S."/>
            <person name="Ikeuchi M."/>
            <person name="Katoh H."/>
            <person name="Sasamoto S."/>
            <person name="Watanabe A."/>
            <person name="Iriguchi M."/>
            <person name="Kawashima K."/>
            <person name="Kimura T."/>
            <person name="Kishida Y."/>
            <person name="Kiyokawa C."/>
            <person name="Kohara M."/>
            <person name="Matsumoto M."/>
            <person name="Matsuno A."/>
            <person name="Nakazaki N."/>
            <person name="Shimpo S."/>
            <person name="Sugimoto M."/>
            <person name="Takeuchi C."/>
            <person name="Yamada M."/>
            <person name="Tabata S."/>
        </authorList>
    </citation>
    <scope>NUCLEOTIDE SEQUENCE [LARGE SCALE GENOMIC DNA]</scope>
    <source>
        <strain>NIES-2133 / IAM M-273 / BP-1</strain>
    </source>
</reference>
<gene>
    <name evidence="1" type="primary">ctaB</name>
    <name type="ordered locus">tll1893</name>
</gene>
<name>COXX_THEVB</name>
<protein>
    <recommendedName>
        <fullName evidence="1">Protoheme IX farnesyltransferase</fullName>
        <ecNumber evidence="1">2.5.1.141</ecNumber>
    </recommendedName>
    <alternativeName>
        <fullName evidence="1">Heme B farnesyltransferase</fullName>
    </alternativeName>
    <alternativeName>
        <fullName evidence="1">Heme O synthase</fullName>
    </alternativeName>
</protein>
<evidence type="ECO:0000255" key="1">
    <source>
        <dbReference type="HAMAP-Rule" id="MF_00154"/>
    </source>
</evidence>
<evidence type="ECO:0000305" key="2"/>
<sequence>MTFLARLSSSTGDLSTKLVDYVQLTKPRLILLFLITTAAAMEVAGQGRVSPQLLLITLGSGTCAAAAANTINCLYDRDIDAVMERTRHRPLPAGRVAPWEAVFLAVLLAITAFSLLAAFANLLSACLAMAGIAVYVGVYTHWLKRSSPQNIVIGGAAGAIPPLVGWAAVTGELSWAAWVLFGMIFVWTPPHFWPLAMLIQEDYARVQVPMLPVVGGDRVTAQQIFLYTLALVPTSLLLVYPCGVVSWGYGVVAIALGSWFIYRAWQLTQAPAERERARRLFKFSILYMMLLCAAMVGDRLLLPHLSAGLNALGALLK</sequence>
<organism>
    <name type="scientific">Thermosynechococcus vestitus (strain NIES-2133 / IAM M-273 / BP-1)</name>
    <dbReference type="NCBI Taxonomy" id="197221"/>
    <lineage>
        <taxon>Bacteria</taxon>
        <taxon>Bacillati</taxon>
        <taxon>Cyanobacteriota</taxon>
        <taxon>Cyanophyceae</taxon>
        <taxon>Acaryochloridales</taxon>
        <taxon>Thermosynechococcaceae</taxon>
        <taxon>Thermosynechococcus</taxon>
    </lineage>
</organism>
<comment type="function">
    <text evidence="1">Converts heme B (protoheme IX) to heme O by substitution of the vinyl group on carbon 2 of heme B porphyrin ring with a hydroxyethyl farnesyl side group.</text>
</comment>
<comment type="catalytic activity">
    <reaction evidence="1">
        <text>heme b + (2E,6E)-farnesyl diphosphate + H2O = Fe(II)-heme o + diphosphate</text>
        <dbReference type="Rhea" id="RHEA:28070"/>
        <dbReference type="ChEBI" id="CHEBI:15377"/>
        <dbReference type="ChEBI" id="CHEBI:33019"/>
        <dbReference type="ChEBI" id="CHEBI:60344"/>
        <dbReference type="ChEBI" id="CHEBI:60530"/>
        <dbReference type="ChEBI" id="CHEBI:175763"/>
        <dbReference type="EC" id="2.5.1.141"/>
    </reaction>
</comment>
<comment type="pathway">
    <text evidence="1">Porphyrin-containing compound metabolism; heme O biosynthesis; heme O from protoheme: step 1/1.</text>
</comment>
<comment type="subcellular location">
    <subcellularLocation>
        <location evidence="1">Cell inner membrane</location>
        <topology evidence="1">Multi-pass membrane protein</topology>
    </subcellularLocation>
</comment>
<comment type="miscellaneous">
    <text evidence="1">Carbon 2 of the heme B porphyrin ring is defined according to the Fischer nomenclature.</text>
</comment>
<comment type="similarity">
    <text evidence="1">Belongs to the UbiA prenyltransferase family. Protoheme IX farnesyltransferase subfamily.</text>
</comment>
<comment type="sequence caution" evidence="2">
    <conflict type="erroneous initiation">
        <sequence resource="EMBL-CDS" id="BAC09445"/>
    </conflict>
</comment>
<dbReference type="EC" id="2.5.1.141" evidence="1"/>
<dbReference type="EMBL" id="BA000039">
    <property type="protein sequence ID" value="BAC09445.1"/>
    <property type="status" value="ALT_INIT"/>
    <property type="molecule type" value="Genomic_DNA"/>
</dbReference>
<dbReference type="RefSeq" id="NP_682683.1">
    <property type="nucleotide sequence ID" value="NC_004113.1"/>
</dbReference>
<dbReference type="RefSeq" id="WP_164920945.1">
    <property type="nucleotide sequence ID" value="NC_004113.1"/>
</dbReference>
<dbReference type="SMR" id="Q8DHQ2"/>
<dbReference type="STRING" id="197221.gene:10748499"/>
<dbReference type="EnsemblBacteria" id="BAC09445">
    <property type="protein sequence ID" value="BAC09445"/>
    <property type="gene ID" value="BAC09445"/>
</dbReference>
<dbReference type="KEGG" id="tel:tll1893"/>
<dbReference type="PATRIC" id="fig|197221.4.peg.1977"/>
<dbReference type="eggNOG" id="COG0109">
    <property type="taxonomic scope" value="Bacteria"/>
</dbReference>
<dbReference type="UniPathway" id="UPA00834">
    <property type="reaction ID" value="UER00712"/>
</dbReference>
<dbReference type="Proteomes" id="UP000000440">
    <property type="component" value="Chromosome"/>
</dbReference>
<dbReference type="GO" id="GO:0005886">
    <property type="term" value="C:plasma membrane"/>
    <property type="evidence" value="ECO:0007669"/>
    <property type="project" value="UniProtKB-SubCell"/>
</dbReference>
<dbReference type="GO" id="GO:0008495">
    <property type="term" value="F:protoheme IX farnesyltransferase activity"/>
    <property type="evidence" value="ECO:0007669"/>
    <property type="project" value="UniProtKB-UniRule"/>
</dbReference>
<dbReference type="GO" id="GO:0048034">
    <property type="term" value="P:heme O biosynthetic process"/>
    <property type="evidence" value="ECO:0007669"/>
    <property type="project" value="UniProtKB-UniRule"/>
</dbReference>
<dbReference type="CDD" id="cd13957">
    <property type="entry name" value="PT_UbiA_Cox10"/>
    <property type="match status" value="1"/>
</dbReference>
<dbReference type="FunFam" id="1.10.357.140:FF:000001">
    <property type="entry name" value="Protoheme IX farnesyltransferase"/>
    <property type="match status" value="1"/>
</dbReference>
<dbReference type="Gene3D" id="1.10.357.140">
    <property type="entry name" value="UbiA prenyltransferase"/>
    <property type="match status" value="1"/>
</dbReference>
<dbReference type="HAMAP" id="MF_00154">
    <property type="entry name" value="CyoE_CtaB"/>
    <property type="match status" value="1"/>
</dbReference>
<dbReference type="InterPro" id="IPR006369">
    <property type="entry name" value="Protohaem_IX_farnesylTrfase"/>
</dbReference>
<dbReference type="InterPro" id="IPR000537">
    <property type="entry name" value="UbiA_prenyltransferase"/>
</dbReference>
<dbReference type="InterPro" id="IPR030470">
    <property type="entry name" value="UbiA_prenylTrfase_CS"/>
</dbReference>
<dbReference type="InterPro" id="IPR044878">
    <property type="entry name" value="UbiA_sf"/>
</dbReference>
<dbReference type="NCBIfam" id="TIGR01473">
    <property type="entry name" value="cyoE_ctaB"/>
    <property type="match status" value="1"/>
</dbReference>
<dbReference type="NCBIfam" id="NF003349">
    <property type="entry name" value="PRK04375.1-2"/>
    <property type="match status" value="1"/>
</dbReference>
<dbReference type="PANTHER" id="PTHR43448:SF7">
    <property type="entry name" value="4-HYDROXYBENZOATE SOLANESYLTRANSFERASE"/>
    <property type="match status" value="1"/>
</dbReference>
<dbReference type="PANTHER" id="PTHR43448">
    <property type="entry name" value="PROTOHEME IX FARNESYLTRANSFERASE, MITOCHONDRIAL"/>
    <property type="match status" value="1"/>
</dbReference>
<dbReference type="Pfam" id="PF01040">
    <property type="entry name" value="UbiA"/>
    <property type="match status" value="1"/>
</dbReference>
<dbReference type="PROSITE" id="PS00943">
    <property type="entry name" value="UBIA"/>
    <property type="match status" value="1"/>
</dbReference>
<feature type="chain" id="PRO_0000327171" description="Protoheme IX farnesyltransferase">
    <location>
        <begin position="1"/>
        <end position="317"/>
    </location>
</feature>
<feature type="transmembrane region" description="Helical" evidence="1">
    <location>
        <begin position="29"/>
        <end position="49"/>
    </location>
</feature>
<feature type="transmembrane region" description="Helical" evidence="1">
    <location>
        <begin position="53"/>
        <end position="73"/>
    </location>
</feature>
<feature type="transmembrane region" description="Helical" evidence="1">
    <location>
        <begin position="102"/>
        <end position="122"/>
    </location>
</feature>
<feature type="transmembrane region" description="Helical" evidence="1">
    <location>
        <begin position="123"/>
        <end position="143"/>
    </location>
</feature>
<feature type="transmembrane region" description="Helical" evidence="1">
    <location>
        <begin position="151"/>
        <end position="171"/>
    </location>
</feature>
<feature type="transmembrane region" description="Helical" evidence="1">
    <location>
        <begin position="179"/>
        <end position="199"/>
    </location>
</feature>
<feature type="transmembrane region" description="Helical" evidence="1">
    <location>
        <begin position="224"/>
        <end position="241"/>
    </location>
</feature>
<feature type="transmembrane region" description="Helical" evidence="1">
    <location>
        <begin position="245"/>
        <end position="267"/>
    </location>
</feature>
<feature type="transmembrane region" description="Helical" evidence="1">
    <location>
        <begin position="283"/>
        <end position="303"/>
    </location>
</feature>
<keyword id="KW-0997">Cell inner membrane</keyword>
<keyword id="KW-1003">Cell membrane</keyword>
<keyword id="KW-0350">Heme biosynthesis</keyword>
<keyword id="KW-0472">Membrane</keyword>
<keyword id="KW-1185">Reference proteome</keyword>
<keyword id="KW-0808">Transferase</keyword>
<keyword id="KW-0812">Transmembrane</keyword>
<keyword id="KW-1133">Transmembrane helix</keyword>
<proteinExistence type="inferred from homology"/>